<gene>
    <name evidence="1" type="primary">rplW</name>
    <name type="ordered locus">MHJ_0188</name>
</gene>
<sequence length="167" mass="19040">MNVNEIIKGPILTEKSYQLMSSGVYSFKVSPKTNRSETKKAVEYIFNVKVEKVNIFTVPKKEKKLGKSKGFTTKYKKALVKLMPGYTINLFEDESPQDQKDSETVSENTEEKAKIAKKKAELEAKNKEIAEKLAKKQAELAKKDSETNENQEKRIENQTENQENSAN</sequence>
<organism>
    <name type="scientific">Mesomycoplasma hyopneumoniae (strain J / ATCC 25934 / NCTC 10110)</name>
    <name type="common">Mycoplasma hyopneumoniae</name>
    <dbReference type="NCBI Taxonomy" id="262719"/>
    <lineage>
        <taxon>Bacteria</taxon>
        <taxon>Bacillati</taxon>
        <taxon>Mycoplasmatota</taxon>
        <taxon>Mycoplasmoidales</taxon>
        <taxon>Metamycoplasmataceae</taxon>
        <taxon>Mesomycoplasma</taxon>
    </lineage>
</organism>
<reference key="1">
    <citation type="journal article" date="2005" name="J. Bacteriol.">
        <title>Swine and poultry pathogens: the complete genome sequences of two strains of Mycoplasma hyopneumoniae and a strain of Mycoplasma synoviae.</title>
        <authorList>
            <person name="Vasconcelos A.T.R."/>
            <person name="Ferreira H.B."/>
            <person name="Bizarro C.V."/>
            <person name="Bonatto S.L."/>
            <person name="Carvalho M.O."/>
            <person name="Pinto P.M."/>
            <person name="Almeida D.F."/>
            <person name="Almeida L.G.P."/>
            <person name="Almeida R."/>
            <person name="Alves-Junior L."/>
            <person name="Assuncao E.N."/>
            <person name="Azevedo V.A.C."/>
            <person name="Bogo M.R."/>
            <person name="Brigido M.M."/>
            <person name="Brocchi M."/>
            <person name="Burity H.A."/>
            <person name="Camargo A.A."/>
            <person name="Camargo S.S."/>
            <person name="Carepo M.S."/>
            <person name="Carraro D.M."/>
            <person name="de Mattos Cascardo J.C."/>
            <person name="Castro L.A."/>
            <person name="Cavalcanti G."/>
            <person name="Chemale G."/>
            <person name="Collevatti R.G."/>
            <person name="Cunha C.W."/>
            <person name="Dallagiovanna B."/>
            <person name="Dambros B.P."/>
            <person name="Dellagostin O.A."/>
            <person name="Falcao C."/>
            <person name="Fantinatti-Garboggini F."/>
            <person name="Felipe M.S.S."/>
            <person name="Fiorentin L."/>
            <person name="Franco G.R."/>
            <person name="Freitas N.S.A."/>
            <person name="Frias D."/>
            <person name="Grangeiro T.B."/>
            <person name="Grisard E.C."/>
            <person name="Guimaraes C.T."/>
            <person name="Hungria M."/>
            <person name="Jardim S.N."/>
            <person name="Krieger M.A."/>
            <person name="Laurino J.P."/>
            <person name="Lima L.F.A."/>
            <person name="Lopes M.I."/>
            <person name="Loreto E.L.S."/>
            <person name="Madeira H.M.F."/>
            <person name="Manfio G.P."/>
            <person name="Maranhao A.Q."/>
            <person name="Martinkovics C.T."/>
            <person name="Medeiros S.R.B."/>
            <person name="Moreira M.A.M."/>
            <person name="Neiva M."/>
            <person name="Ramalho-Neto C.E."/>
            <person name="Nicolas M.F."/>
            <person name="Oliveira S.C."/>
            <person name="Paixao R.F.C."/>
            <person name="Pedrosa F.O."/>
            <person name="Pena S.D.J."/>
            <person name="Pereira M."/>
            <person name="Pereira-Ferrari L."/>
            <person name="Piffer I."/>
            <person name="Pinto L.S."/>
            <person name="Potrich D.P."/>
            <person name="Salim A.C.M."/>
            <person name="Santos F.R."/>
            <person name="Schmitt R."/>
            <person name="Schneider M.P.C."/>
            <person name="Schrank A."/>
            <person name="Schrank I.S."/>
            <person name="Schuck A.F."/>
            <person name="Seuanez H.N."/>
            <person name="Silva D.W."/>
            <person name="Silva R."/>
            <person name="Silva S.C."/>
            <person name="Soares C.M.A."/>
            <person name="Souza K.R.L."/>
            <person name="Souza R.C."/>
            <person name="Staats C.C."/>
            <person name="Steffens M.B.R."/>
            <person name="Teixeira S.M.R."/>
            <person name="Urmenyi T.P."/>
            <person name="Vainstein M.H."/>
            <person name="Zuccherato L.W."/>
            <person name="Simpson A.J.G."/>
            <person name="Zaha A."/>
        </authorList>
    </citation>
    <scope>NUCLEOTIDE SEQUENCE [LARGE SCALE GENOMIC DNA]</scope>
    <source>
        <strain>J / ATCC 25934 / NCTC 10110</strain>
    </source>
</reference>
<accession>Q4AAE2</accession>
<feature type="chain" id="PRO_0000272777" description="Large ribosomal subunit protein uL23">
    <location>
        <begin position="1"/>
        <end position="167"/>
    </location>
</feature>
<feature type="region of interest" description="Large ribosomal subunit protein uL23" evidence="1">
    <location>
        <begin position="1"/>
        <end position="118"/>
    </location>
</feature>
<feature type="region of interest" description="Disordered" evidence="2">
    <location>
        <begin position="91"/>
        <end position="112"/>
    </location>
</feature>
<feature type="region of interest" description="Unknown">
    <location>
        <begin position="119"/>
        <end position="167"/>
    </location>
</feature>
<feature type="region of interest" description="Disordered" evidence="2">
    <location>
        <begin position="136"/>
        <end position="167"/>
    </location>
</feature>
<feature type="compositionally biased region" description="Basic and acidic residues" evidence="2">
    <location>
        <begin position="97"/>
        <end position="112"/>
    </location>
</feature>
<feature type="compositionally biased region" description="Basic and acidic residues" evidence="2">
    <location>
        <begin position="136"/>
        <end position="157"/>
    </location>
</feature>
<feature type="compositionally biased region" description="Polar residues" evidence="2">
    <location>
        <begin position="158"/>
        <end position="167"/>
    </location>
</feature>
<name>RL23_MESHJ</name>
<comment type="function">
    <text evidence="1">One of the early assembly proteins it binds 23S rRNA. One of the proteins that surrounds the polypeptide exit tunnel on the outside of the ribosome. Forms the main docking site for trigger factor binding to the ribosome.</text>
</comment>
<comment type="subunit">
    <text evidence="1">Part of the 50S ribosomal subunit. Contacts protein L29, and trigger factor when it is bound to the ribosome.</text>
</comment>
<comment type="similarity">
    <text evidence="1">Belongs to the universal ribosomal protein uL23 family.</text>
</comment>
<keyword id="KW-0687">Ribonucleoprotein</keyword>
<keyword id="KW-0689">Ribosomal protein</keyword>
<keyword id="KW-0694">RNA-binding</keyword>
<keyword id="KW-0699">rRNA-binding</keyword>
<dbReference type="EMBL" id="AE017243">
    <property type="protein sequence ID" value="AAZ44279.1"/>
    <property type="molecule type" value="Genomic_DNA"/>
</dbReference>
<dbReference type="RefSeq" id="WP_011283974.1">
    <property type="nucleotide sequence ID" value="NC_007295.1"/>
</dbReference>
<dbReference type="SMR" id="Q4AAE2"/>
<dbReference type="GeneID" id="41334491"/>
<dbReference type="KEGG" id="mhj:MHJ_0188"/>
<dbReference type="eggNOG" id="COG0089">
    <property type="taxonomic scope" value="Bacteria"/>
</dbReference>
<dbReference type="HOGENOM" id="CLU_037562_1_0_14"/>
<dbReference type="OrthoDB" id="9793353at2"/>
<dbReference type="Proteomes" id="UP000000548">
    <property type="component" value="Chromosome"/>
</dbReference>
<dbReference type="GO" id="GO:1990904">
    <property type="term" value="C:ribonucleoprotein complex"/>
    <property type="evidence" value="ECO:0007669"/>
    <property type="project" value="UniProtKB-KW"/>
</dbReference>
<dbReference type="GO" id="GO:0005840">
    <property type="term" value="C:ribosome"/>
    <property type="evidence" value="ECO:0007669"/>
    <property type="project" value="UniProtKB-KW"/>
</dbReference>
<dbReference type="GO" id="GO:0019843">
    <property type="term" value="F:rRNA binding"/>
    <property type="evidence" value="ECO:0007669"/>
    <property type="project" value="UniProtKB-UniRule"/>
</dbReference>
<dbReference type="GO" id="GO:0003735">
    <property type="term" value="F:structural constituent of ribosome"/>
    <property type="evidence" value="ECO:0007669"/>
    <property type="project" value="InterPro"/>
</dbReference>
<dbReference type="GO" id="GO:0006412">
    <property type="term" value="P:translation"/>
    <property type="evidence" value="ECO:0007669"/>
    <property type="project" value="UniProtKB-UniRule"/>
</dbReference>
<dbReference type="Gene3D" id="3.30.70.330">
    <property type="match status" value="1"/>
</dbReference>
<dbReference type="HAMAP" id="MF_01369_B">
    <property type="entry name" value="Ribosomal_uL23_B"/>
    <property type="match status" value="1"/>
</dbReference>
<dbReference type="InterPro" id="IPR012677">
    <property type="entry name" value="Nucleotide-bd_a/b_plait_sf"/>
</dbReference>
<dbReference type="InterPro" id="IPR013025">
    <property type="entry name" value="Ribosomal_uL23-like"/>
</dbReference>
<dbReference type="InterPro" id="IPR012678">
    <property type="entry name" value="Ribosomal_uL23/eL15/eS24_sf"/>
</dbReference>
<dbReference type="NCBIfam" id="NF004363">
    <property type="entry name" value="PRK05738.2-4"/>
    <property type="match status" value="1"/>
</dbReference>
<dbReference type="NCBIfam" id="NF008918">
    <property type="entry name" value="PRK12280.1-1"/>
    <property type="match status" value="1"/>
</dbReference>
<dbReference type="NCBIfam" id="NF008919">
    <property type="entry name" value="PRK12280.1-3"/>
    <property type="match status" value="1"/>
</dbReference>
<dbReference type="PANTHER" id="PTHR11620">
    <property type="entry name" value="60S RIBOSOMAL PROTEIN L23A"/>
    <property type="match status" value="1"/>
</dbReference>
<dbReference type="Pfam" id="PF00276">
    <property type="entry name" value="Ribosomal_L23"/>
    <property type="match status" value="1"/>
</dbReference>
<dbReference type="SUPFAM" id="SSF54189">
    <property type="entry name" value="Ribosomal proteins S24e, L23 and L15e"/>
    <property type="match status" value="1"/>
</dbReference>
<proteinExistence type="inferred from homology"/>
<evidence type="ECO:0000255" key="1">
    <source>
        <dbReference type="HAMAP-Rule" id="MF_01369"/>
    </source>
</evidence>
<evidence type="ECO:0000256" key="2">
    <source>
        <dbReference type="SAM" id="MobiDB-lite"/>
    </source>
</evidence>
<protein>
    <recommendedName>
        <fullName evidence="1">Large ribosomal subunit protein uL23</fullName>
    </recommendedName>
    <alternativeName>
        <fullName>50S ribosomal protein L23</fullName>
    </alternativeName>
</protein>